<keyword id="KW-0002">3D-structure</keyword>
<keyword id="KW-0012">Acyltransferase</keyword>
<keyword id="KW-0225">Disease variant</keyword>
<keyword id="KW-0256">Endoplasmic reticulum</keyword>
<keyword id="KW-0333">Golgi apparatus</keyword>
<keyword id="KW-0945">Host-virus interaction</keyword>
<keyword id="KW-0991">Intellectual disability</keyword>
<keyword id="KW-0449">Lipoprotein</keyword>
<keyword id="KW-0472">Membrane</keyword>
<keyword id="KW-0564">Palmitate</keyword>
<keyword id="KW-1267">Proteomics identification</keyword>
<keyword id="KW-1185">Reference proteome</keyword>
<keyword id="KW-0808">Transferase</keyword>
<keyword id="KW-0812">Transmembrane</keyword>
<keyword id="KW-1133">Transmembrane helix</keyword>
<comment type="function">
    <text evidence="5 8 10 11 12">Palmitoyltransferase that catalyzes the addition of palmitate onto various protein substrates, such as ADRB2, GSDMD, HRAS, NRAS and CGAS (PubMed:16000296, PubMed:27481942, PubMed:37802025, PubMed:38530158, PubMed:38599239). The ZDHHC9-GOLGA7 complex is a palmitoyltransferase specific for HRAS and NRAS (PubMed:16000296). May have a palmitoyltransferase activity toward the beta-2 adrenergic receptor/ADRB2 and therefore regulate G protein-coupled receptor signaling (PubMed:27481942). Acts as a regulator of innate immunity by catalyzing palmitoylation of CGAS, thereby promoting CGAS homodimerization and cyclic GMP-AMP synthase activity (PubMed:37802025). Activates pyroptosis by catalyzing palmitoylation of gasdermin-D (GSDMD), thereby promoting membrane translocation and pore formation of GSDMD (PubMed:38530158, PubMed:38599239).</text>
</comment>
<comment type="function">
    <text evidence="9">(Microbial infection) Through a sequential action with ZDHHC20, rapidly and efficiently palmitoylates SARS coronavirus-2/SARS-CoV-2 spike protein following its synthesis in the endoplasmic reticulum (ER). In the infected cell, promotes spike biogenesis by protecting it from premature ER degradation, increases half-life and controls the lipid organization of its immediate membrane environment. Once the virus has formed, spike palmitoylation controls fusion with the target cell.</text>
</comment>
<comment type="catalytic activity">
    <reaction evidence="5 9 10 11 12">
        <text>L-cysteinyl-[protein] + hexadecanoyl-CoA = S-hexadecanoyl-L-cysteinyl-[protein] + CoA</text>
        <dbReference type="Rhea" id="RHEA:36683"/>
        <dbReference type="Rhea" id="RHEA-COMP:10131"/>
        <dbReference type="Rhea" id="RHEA-COMP:11032"/>
        <dbReference type="ChEBI" id="CHEBI:29950"/>
        <dbReference type="ChEBI" id="CHEBI:57287"/>
        <dbReference type="ChEBI" id="CHEBI:57379"/>
        <dbReference type="ChEBI" id="CHEBI:74151"/>
        <dbReference type="EC" id="2.3.1.225"/>
    </reaction>
    <physiologicalReaction direction="left-to-right" evidence="10 15">
        <dbReference type="Rhea" id="RHEA:36684"/>
    </physiologicalReaction>
</comment>
<comment type="subunit">
    <text evidence="5">Interacts with GOLGA7.</text>
</comment>
<comment type="interaction">
    <interactant intactId="EBI-12690113">
        <id>Q9Y397</id>
    </interactant>
    <interactant intactId="EBI-625022">
        <id>O43889-2</id>
        <label>CREB3</label>
    </interactant>
    <organismsDiffer>false</organismsDiffer>
    <experiments>3</experiments>
</comment>
<comment type="subcellular location">
    <subcellularLocation>
        <location evidence="5 9">Endoplasmic reticulum membrane</location>
        <topology evidence="2">Multi-pass membrane protein</topology>
    </subcellularLocation>
    <subcellularLocation>
        <location evidence="5 8">Golgi apparatus membrane</location>
        <topology evidence="2">Multi-pass membrane protein</topology>
    </subcellularLocation>
</comment>
<comment type="tissue specificity">
    <text evidence="5">Highly expressed in kidney, skeletal muscle, brain, lung and liver. Absent in thymus, spleen and leukocytes.</text>
</comment>
<comment type="domain">
    <text evidence="1">The DHHC domain is required for palmitoyltransferase activity.</text>
</comment>
<comment type="disease" evidence="6 7">
    <disease id="DI-02508">
        <name>Intellectual developmental disorder, X-linked, syndromic, Raymond type</name>
        <acronym>MRXSR</acronym>
        <description>A disorder characterized by significantly below average general intellectual functioning associated with impairments in adaptive behavior and manifested during the developmental period. Some MRXSR patients show additional features, including marfanoid habitus, epilepsy, facial dysmorphism, hypotonia, and behavioral problems.</description>
        <dbReference type="MIM" id="300799"/>
    </disease>
    <text>The disease is caused by variants affecting the gene represented in this entry.</text>
</comment>
<comment type="similarity">
    <text evidence="14">Belongs to the DHHC palmitoyltransferase family. ERF2/ZDHHC9 subfamily.</text>
</comment>
<comment type="sequence caution" evidence="14">
    <conflict type="erroneous initiation">
        <sequence resource="EMBL-CDS" id="AAD34084"/>
    </conflict>
    <text>Extended N-terminus.</text>
</comment>
<comment type="sequence caution" evidence="14">
    <conflict type="erroneous initiation">
        <sequence resource="EMBL-CDS" id="BAA91683"/>
    </conflict>
    <text>Truncated N-terminus.</text>
</comment>
<comment type="sequence caution" evidence="14">
    <conflict type="erroneous initiation">
        <sequence resource="EMBL-CDS" id="BAD93044"/>
    </conflict>
    <text>Extended N-terminus.</text>
</comment>
<comment type="sequence caution" evidence="14">
    <conflict type="erroneous initiation">
        <sequence resource="EMBL-CDS" id="CAB82308"/>
    </conflict>
    <text>Extended N-terminus.</text>
</comment>
<dbReference type="EC" id="2.3.1.225" evidence="5 10 11 12"/>
<dbReference type="EMBL" id="AY952881">
    <property type="protein sequence ID" value="ACF60379.1"/>
    <property type="molecule type" value="mRNA"/>
</dbReference>
<dbReference type="EMBL" id="AF151847">
    <property type="protein sequence ID" value="AAD34084.1"/>
    <property type="status" value="ALT_INIT"/>
    <property type="molecule type" value="mRNA"/>
</dbReference>
<dbReference type="EMBL" id="AY358558">
    <property type="protein sequence ID" value="AAQ88922.1"/>
    <property type="molecule type" value="mRNA"/>
</dbReference>
<dbReference type="EMBL" id="AK001524">
    <property type="protein sequence ID" value="BAA91740.1"/>
    <property type="molecule type" value="mRNA"/>
</dbReference>
<dbReference type="EMBL" id="AK001424">
    <property type="protein sequence ID" value="BAA91683.1"/>
    <property type="status" value="ALT_INIT"/>
    <property type="molecule type" value="mRNA"/>
</dbReference>
<dbReference type="EMBL" id="AB209807">
    <property type="protein sequence ID" value="BAD93044.1"/>
    <property type="status" value="ALT_INIT"/>
    <property type="molecule type" value="mRNA"/>
</dbReference>
<dbReference type="EMBL" id="AL161962">
    <property type="protein sequence ID" value="CAB82308.1"/>
    <property type="status" value="ALT_INIT"/>
    <property type="molecule type" value="mRNA"/>
</dbReference>
<dbReference type="EMBL" id="AL034405">
    <property type="status" value="NOT_ANNOTATED_CDS"/>
    <property type="molecule type" value="Genomic_DNA"/>
</dbReference>
<dbReference type="EMBL" id="AL359542">
    <property type="status" value="NOT_ANNOTATED_CDS"/>
    <property type="molecule type" value="Genomic_DNA"/>
</dbReference>
<dbReference type="EMBL" id="CH471107">
    <property type="protein sequence ID" value="EAX11823.1"/>
    <property type="molecule type" value="Genomic_DNA"/>
</dbReference>
<dbReference type="EMBL" id="CH471107">
    <property type="protein sequence ID" value="EAX11824.1"/>
    <property type="molecule type" value="Genomic_DNA"/>
</dbReference>
<dbReference type="EMBL" id="CH471107">
    <property type="protein sequence ID" value="EAX11825.1"/>
    <property type="molecule type" value="Genomic_DNA"/>
</dbReference>
<dbReference type="EMBL" id="BC000035">
    <property type="protein sequence ID" value="AAH00035.1"/>
    <property type="molecule type" value="mRNA"/>
</dbReference>
<dbReference type="EMBL" id="BC003128">
    <property type="protein sequence ID" value="AAH03128.1"/>
    <property type="molecule type" value="mRNA"/>
</dbReference>
<dbReference type="EMBL" id="BC006200">
    <property type="protein sequence ID" value="AAH06200.1"/>
    <property type="molecule type" value="mRNA"/>
</dbReference>
<dbReference type="EMBL" id="BC012826">
    <property type="protein sequence ID" value="AAH12826.1"/>
    <property type="molecule type" value="mRNA"/>
</dbReference>
<dbReference type="CCDS" id="CCDS35395.1"/>
<dbReference type="RefSeq" id="NP_001008223.1">
    <property type="nucleotide sequence ID" value="NM_001008222.3"/>
</dbReference>
<dbReference type="RefSeq" id="NP_057116.2">
    <property type="nucleotide sequence ID" value="NM_016032.4"/>
</dbReference>
<dbReference type="PDB" id="8HF3">
    <property type="method" value="EM"/>
    <property type="resolution" value="3.40 A"/>
    <property type="chains" value="A=1-364"/>
</dbReference>
<dbReference type="PDBsum" id="8HF3"/>
<dbReference type="EMDB" id="EMD-34711"/>
<dbReference type="SMR" id="Q9Y397"/>
<dbReference type="BioGRID" id="119302">
    <property type="interactions" value="60"/>
</dbReference>
<dbReference type="CORUM" id="Q9Y397"/>
<dbReference type="FunCoup" id="Q9Y397">
    <property type="interactions" value="874"/>
</dbReference>
<dbReference type="IntAct" id="Q9Y397">
    <property type="interactions" value="45"/>
</dbReference>
<dbReference type="STRING" id="9606.ENSP00000349689"/>
<dbReference type="TCDB" id="8.A.114.1.5">
    <property type="family name" value="the huntington-interacting protein 14 (hip14) family"/>
</dbReference>
<dbReference type="iPTMnet" id="Q9Y397"/>
<dbReference type="PhosphoSitePlus" id="Q9Y397"/>
<dbReference type="SwissPalm" id="Q9Y397"/>
<dbReference type="BioMuta" id="ZDHHC9"/>
<dbReference type="DMDM" id="28202113"/>
<dbReference type="jPOST" id="Q9Y397"/>
<dbReference type="MassIVE" id="Q9Y397"/>
<dbReference type="PaxDb" id="9606-ENSP00000349689"/>
<dbReference type="PeptideAtlas" id="Q9Y397"/>
<dbReference type="ProteomicsDB" id="85988"/>
<dbReference type="Antibodypedia" id="30107">
    <property type="antibodies" value="210 antibodies from 33 providers"/>
</dbReference>
<dbReference type="DNASU" id="51114"/>
<dbReference type="Ensembl" id="ENST00000357166.11">
    <property type="protein sequence ID" value="ENSP00000349689.6"/>
    <property type="gene ID" value="ENSG00000188706.13"/>
</dbReference>
<dbReference type="Ensembl" id="ENST00000371064.7">
    <property type="protein sequence ID" value="ENSP00000360103.3"/>
    <property type="gene ID" value="ENSG00000188706.13"/>
</dbReference>
<dbReference type="GeneID" id="51114"/>
<dbReference type="KEGG" id="hsa:51114"/>
<dbReference type="MANE-Select" id="ENST00000357166.11">
    <property type="protein sequence ID" value="ENSP00000349689.6"/>
    <property type="RefSeq nucleotide sequence ID" value="NM_016032.4"/>
    <property type="RefSeq protein sequence ID" value="NP_057116.2"/>
</dbReference>
<dbReference type="UCSC" id="uc004euv.4">
    <property type="organism name" value="human"/>
</dbReference>
<dbReference type="AGR" id="HGNC:18475"/>
<dbReference type="CTD" id="51114"/>
<dbReference type="DisGeNET" id="51114"/>
<dbReference type="GeneCards" id="ZDHHC9"/>
<dbReference type="HGNC" id="HGNC:18475">
    <property type="gene designation" value="ZDHHC9"/>
</dbReference>
<dbReference type="HPA" id="ENSG00000188706">
    <property type="expression patterns" value="Low tissue specificity"/>
</dbReference>
<dbReference type="MalaCards" id="ZDHHC9"/>
<dbReference type="MIM" id="300646">
    <property type="type" value="gene"/>
</dbReference>
<dbReference type="MIM" id="300799">
    <property type="type" value="phenotype"/>
</dbReference>
<dbReference type="neXtProt" id="NX_Q9Y397"/>
<dbReference type="OpenTargets" id="ENSG00000188706"/>
<dbReference type="Orphanet" id="776">
    <property type="disease" value="Lujan-Fryns syndrome"/>
</dbReference>
<dbReference type="PharmGKB" id="PA38340"/>
<dbReference type="VEuPathDB" id="HostDB:ENSG00000188706"/>
<dbReference type="eggNOG" id="KOG1311">
    <property type="taxonomic scope" value="Eukaryota"/>
</dbReference>
<dbReference type="GeneTree" id="ENSGT00940000159999"/>
<dbReference type="HOGENOM" id="CLU_018741_3_1_1"/>
<dbReference type="InParanoid" id="Q9Y397"/>
<dbReference type="OMA" id="YVTMFLI"/>
<dbReference type="OrthoDB" id="4096362at2759"/>
<dbReference type="PAN-GO" id="Q9Y397">
    <property type="GO annotations" value="5 GO annotations based on evolutionary models"/>
</dbReference>
<dbReference type="PhylomeDB" id="Q9Y397"/>
<dbReference type="TreeFam" id="TF312923"/>
<dbReference type="BRENDA" id="2.3.1.225">
    <property type="organism ID" value="2681"/>
</dbReference>
<dbReference type="PathwayCommons" id="Q9Y397"/>
<dbReference type="Reactome" id="R-HSA-9648002">
    <property type="pathway name" value="RAS processing"/>
</dbReference>
<dbReference type="Reactome" id="R-HSA-9694548">
    <property type="pathway name" value="Maturation of spike protein"/>
</dbReference>
<dbReference type="SignaLink" id="Q9Y397"/>
<dbReference type="SIGNOR" id="Q9Y397"/>
<dbReference type="BioGRID-ORCS" id="51114">
    <property type="hits" value="13 hits in 779 CRISPR screens"/>
</dbReference>
<dbReference type="ChiTaRS" id="ZDHHC9">
    <property type="organism name" value="human"/>
</dbReference>
<dbReference type="GeneWiki" id="ZDHHC9"/>
<dbReference type="GenomeRNAi" id="51114"/>
<dbReference type="Pharos" id="Q9Y397">
    <property type="development level" value="Tbio"/>
</dbReference>
<dbReference type="PRO" id="PR:Q9Y397"/>
<dbReference type="Proteomes" id="UP000005640">
    <property type="component" value="Chromosome X"/>
</dbReference>
<dbReference type="RNAct" id="Q9Y397">
    <property type="molecule type" value="protein"/>
</dbReference>
<dbReference type="Bgee" id="ENSG00000188706">
    <property type="expression patterns" value="Expressed in corpus callosum and 175 other cell types or tissues"/>
</dbReference>
<dbReference type="ExpressionAtlas" id="Q9Y397">
    <property type="expression patterns" value="baseline and differential"/>
</dbReference>
<dbReference type="GO" id="GO:0005829">
    <property type="term" value="C:cytosol"/>
    <property type="evidence" value="ECO:0000314"/>
    <property type="project" value="HPA"/>
</dbReference>
<dbReference type="GO" id="GO:0005783">
    <property type="term" value="C:endoplasmic reticulum"/>
    <property type="evidence" value="ECO:0000314"/>
    <property type="project" value="UniProtKB"/>
</dbReference>
<dbReference type="GO" id="GO:0005789">
    <property type="term" value="C:endoplasmic reticulum membrane"/>
    <property type="evidence" value="ECO:0000314"/>
    <property type="project" value="UniProt"/>
</dbReference>
<dbReference type="GO" id="GO:0033116">
    <property type="term" value="C:endoplasmic reticulum-Golgi intermediate compartment membrane"/>
    <property type="evidence" value="ECO:0000305"/>
    <property type="project" value="UniProt"/>
</dbReference>
<dbReference type="GO" id="GO:0005794">
    <property type="term" value="C:Golgi apparatus"/>
    <property type="evidence" value="ECO:0000314"/>
    <property type="project" value="UniProtKB"/>
</dbReference>
<dbReference type="GO" id="GO:0000139">
    <property type="term" value="C:Golgi membrane"/>
    <property type="evidence" value="ECO:0000314"/>
    <property type="project" value="UniProtKB"/>
</dbReference>
<dbReference type="GO" id="GO:0002178">
    <property type="term" value="C:palmitoyltransferase complex"/>
    <property type="evidence" value="ECO:0000314"/>
    <property type="project" value="UniProtKB"/>
</dbReference>
<dbReference type="GO" id="GO:0016409">
    <property type="term" value="F:palmitoyltransferase activity"/>
    <property type="evidence" value="ECO:0000314"/>
    <property type="project" value="UniProtKB"/>
</dbReference>
<dbReference type="GO" id="GO:0019706">
    <property type="term" value="F:protein-cysteine S-palmitoyltransferase activity"/>
    <property type="evidence" value="ECO:0000314"/>
    <property type="project" value="UniProtKB"/>
</dbReference>
<dbReference type="GO" id="GO:0043849">
    <property type="term" value="F:Ras palmitoyltransferase activity"/>
    <property type="evidence" value="ECO:0000314"/>
    <property type="project" value="UniProtKB"/>
</dbReference>
<dbReference type="GO" id="GO:0000165">
    <property type="term" value="P:MAPK cascade"/>
    <property type="evidence" value="ECO:0000304"/>
    <property type="project" value="Reactome"/>
</dbReference>
<dbReference type="GO" id="GO:0018230">
    <property type="term" value="P:peptidyl-L-cysteine S-palmitoylation"/>
    <property type="evidence" value="ECO:0000314"/>
    <property type="project" value="UniProtKB"/>
</dbReference>
<dbReference type="GO" id="GO:0044794">
    <property type="term" value="P:positive regulation by host of viral process"/>
    <property type="evidence" value="ECO:0000314"/>
    <property type="project" value="UniProtKB"/>
</dbReference>
<dbReference type="GO" id="GO:0141111">
    <property type="term" value="P:positive regulation of cGAS/STING signaling pathway"/>
    <property type="evidence" value="ECO:0000314"/>
    <property type="project" value="UniProt"/>
</dbReference>
<dbReference type="GO" id="GO:0140639">
    <property type="term" value="P:positive regulation of pyroptotic inflammatory response"/>
    <property type="evidence" value="ECO:0000314"/>
    <property type="project" value="UniProtKB"/>
</dbReference>
<dbReference type="GO" id="GO:0018345">
    <property type="term" value="P:protein palmitoylation"/>
    <property type="evidence" value="ECO:0000314"/>
    <property type="project" value="UniProtKB"/>
</dbReference>
<dbReference type="GO" id="GO:0006612">
    <property type="term" value="P:protein targeting to membrane"/>
    <property type="evidence" value="ECO:0000318"/>
    <property type="project" value="GO_Central"/>
</dbReference>
<dbReference type="InterPro" id="IPR001594">
    <property type="entry name" value="Palmitoyltrfase_DHHC"/>
</dbReference>
<dbReference type="InterPro" id="IPR039859">
    <property type="entry name" value="PFA4/ZDH16/20/ERF2-like"/>
</dbReference>
<dbReference type="PANTHER" id="PTHR22883:SF71">
    <property type="entry name" value="PALMITOYLTRANSFERASE ZDHHC9"/>
    <property type="match status" value="1"/>
</dbReference>
<dbReference type="PANTHER" id="PTHR22883">
    <property type="entry name" value="ZINC FINGER DHHC DOMAIN CONTAINING PROTEIN"/>
    <property type="match status" value="1"/>
</dbReference>
<dbReference type="Pfam" id="PF01529">
    <property type="entry name" value="DHHC"/>
    <property type="match status" value="1"/>
</dbReference>
<dbReference type="PROSITE" id="PS50216">
    <property type="entry name" value="DHHC"/>
    <property type="match status" value="1"/>
</dbReference>
<sequence length="364" mass="40916">MSVMVVRKKVTRKWEKLPGRNTFCCDGRVMMARQKGIFYLTLFLILGTCTLFFAFECRYLAVQLSPAIPVFAAMLFLFSMATLLRTSFSDPGVIPRALPDEAAFIEMEIEATNGAVPQGQRPPPRIKNFQINNQIVKLKYCYTCKIFRPPRASHCSICDNCVERFDHHCPWVGNCVGKRNYRYFYLFILSLSLLTIYVFAFNIVYVALKSLKIGFLETLKETPGTVLEVLICFFTLWSVVGLTGFHTFLVALNQTTNEDIKGSWTGKNRVQNPYSHGNIVKNCCEVLCGPLPPSVLDRRGILPLEESGSRPPSTQETSSSLLPQSPAPTEHLNSNEMPEDSSTPEEMPPPEPPEPPQEAAEAEK</sequence>
<proteinExistence type="evidence at protein level"/>
<evidence type="ECO:0000250" key="1">
    <source>
        <dbReference type="UniProtKB" id="Q8IUH5"/>
    </source>
</evidence>
<evidence type="ECO:0000255" key="2"/>
<evidence type="ECO:0000255" key="3">
    <source>
        <dbReference type="PROSITE-ProRule" id="PRU00067"/>
    </source>
</evidence>
<evidence type="ECO:0000256" key="4">
    <source>
        <dbReference type="SAM" id="MobiDB-lite"/>
    </source>
</evidence>
<evidence type="ECO:0000269" key="5">
    <source>
    </source>
</evidence>
<evidence type="ECO:0000269" key="6">
    <source>
    </source>
</evidence>
<evidence type="ECO:0000269" key="7">
    <source>
    </source>
</evidence>
<evidence type="ECO:0000269" key="8">
    <source>
    </source>
</evidence>
<evidence type="ECO:0000269" key="9">
    <source>
    </source>
</evidence>
<evidence type="ECO:0000269" key="10">
    <source>
    </source>
</evidence>
<evidence type="ECO:0000269" key="11">
    <source>
    </source>
</evidence>
<evidence type="ECO:0000269" key="12">
    <source>
    </source>
</evidence>
<evidence type="ECO:0000303" key="13">
    <source>
    </source>
</evidence>
<evidence type="ECO:0000305" key="14"/>
<evidence type="ECO:0000305" key="15">
    <source>
    </source>
</evidence>
<evidence type="ECO:0000305" key="16">
    <source>
    </source>
</evidence>
<evidence type="ECO:0000312" key="17">
    <source>
        <dbReference type="HGNC" id="HGNC:18475"/>
    </source>
</evidence>
<evidence type="ECO:0007829" key="18">
    <source>
        <dbReference type="PDB" id="8HF3"/>
    </source>
</evidence>
<protein>
    <recommendedName>
        <fullName>Palmitoyltransferase ZDHHC9</fullName>
        <ecNumber evidence="5 10 11 12">2.3.1.225</ecNumber>
    </recommendedName>
    <alternativeName>
        <fullName>Zinc finger DHHC domain-containing protein 9</fullName>
        <shortName>DHHC-9</shortName>
        <shortName>DHHC9</shortName>
    </alternativeName>
    <alternativeName>
        <fullName>Zinc finger protein 379</fullName>
    </alternativeName>
    <alternativeName>
        <fullName>Zinc finger protein 380</fullName>
    </alternativeName>
</protein>
<organism>
    <name type="scientific">Homo sapiens</name>
    <name type="common">Human</name>
    <dbReference type="NCBI Taxonomy" id="9606"/>
    <lineage>
        <taxon>Eukaryota</taxon>
        <taxon>Metazoa</taxon>
        <taxon>Chordata</taxon>
        <taxon>Craniata</taxon>
        <taxon>Vertebrata</taxon>
        <taxon>Euteleostomi</taxon>
        <taxon>Mammalia</taxon>
        <taxon>Eutheria</taxon>
        <taxon>Euarchontoglires</taxon>
        <taxon>Primates</taxon>
        <taxon>Haplorrhini</taxon>
        <taxon>Catarrhini</taxon>
        <taxon>Hominidae</taxon>
        <taxon>Homo</taxon>
    </lineage>
</organism>
<reference key="1">
    <citation type="journal article" date="2006" name="Cancer Immunol. Immunother.">
        <title>Serological identification and bioinformatics analysis of immunogenic antigens in multiple myeloma.</title>
        <authorList>
            <person name="Zhou F.L."/>
            <person name="Zhang W.G."/>
            <person name="Chen G."/>
            <person name="Zhao W.H."/>
            <person name="Cao X.M."/>
            <person name="Chen Y.X."/>
            <person name="Tian W."/>
            <person name="Liu J."/>
            <person name="Liu S.H."/>
        </authorList>
    </citation>
    <scope>NUCLEOTIDE SEQUENCE [MRNA]</scope>
</reference>
<reference key="2">
    <citation type="journal article" date="2000" name="Genome Res.">
        <title>Identification of novel human genes evolutionarily conserved in Caenorhabditis elegans by comparative proteomics.</title>
        <authorList>
            <person name="Lai C.-H."/>
            <person name="Chou C.-Y."/>
            <person name="Ch'ang L.-Y."/>
            <person name="Liu C.-S."/>
            <person name="Lin W.-C."/>
        </authorList>
    </citation>
    <scope>NUCLEOTIDE SEQUENCE [LARGE SCALE MRNA]</scope>
</reference>
<reference key="3">
    <citation type="journal article" date="2003" name="Genome Res.">
        <title>The secreted protein discovery initiative (SPDI), a large-scale effort to identify novel human secreted and transmembrane proteins: a bioinformatics assessment.</title>
        <authorList>
            <person name="Clark H.F."/>
            <person name="Gurney A.L."/>
            <person name="Abaya E."/>
            <person name="Baker K."/>
            <person name="Baldwin D.T."/>
            <person name="Brush J."/>
            <person name="Chen J."/>
            <person name="Chow B."/>
            <person name="Chui C."/>
            <person name="Crowley C."/>
            <person name="Currell B."/>
            <person name="Deuel B."/>
            <person name="Dowd P."/>
            <person name="Eaton D."/>
            <person name="Foster J.S."/>
            <person name="Grimaldi C."/>
            <person name="Gu Q."/>
            <person name="Hass P.E."/>
            <person name="Heldens S."/>
            <person name="Huang A."/>
            <person name="Kim H.S."/>
            <person name="Klimowski L."/>
            <person name="Jin Y."/>
            <person name="Johnson S."/>
            <person name="Lee J."/>
            <person name="Lewis L."/>
            <person name="Liao D."/>
            <person name="Mark M.R."/>
            <person name="Robbie E."/>
            <person name="Sanchez C."/>
            <person name="Schoenfeld J."/>
            <person name="Seshagiri S."/>
            <person name="Simmons L."/>
            <person name="Singh J."/>
            <person name="Smith V."/>
            <person name="Stinson J."/>
            <person name="Vagts A."/>
            <person name="Vandlen R.L."/>
            <person name="Watanabe C."/>
            <person name="Wieand D."/>
            <person name="Woods K."/>
            <person name="Xie M.-H."/>
            <person name="Yansura D.G."/>
            <person name="Yi S."/>
            <person name="Yu G."/>
            <person name="Yuan J."/>
            <person name="Zhang M."/>
            <person name="Zhang Z."/>
            <person name="Goddard A.D."/>
            <person name="Wood W.I."/>
            <person name="Godowski P.J."/>
            <person name="Gray A.M."/>
        </authorList>
    </citation>
    <scope>NUCLEOTIDE SEQUENCE [LARGE SCALE MRNA]</scope>
</reference>
<reference key="4">
    <citation type="journal article" date="2004" name="Nat. Genet.">
        <title>Complete sequencing and characterization of 21,243 full-length human cDNAs.</title>
        <authorList>
            <person name="Ota T."/>
            <person name="Suzuki Y."/>
            <person name="Nishikawa T."/>
            <person name="Otsuki T."/>
            <person name="Sugiyama T."/>
            <person name="Irie R."/>
            <person name="Wakamatsu A."/>
            <person name="Hayashi K."/>
            <person name="Sato H."/>
            <person name="Nagai K."/>
            <person name="Kimura K."/>
            <person name="Makita H."/>
            <person name="Sekine M."/>
            <person name="Obayashi M."/>
            <person name="Nishi T."/>
            <person name="Shibahara T."/>
            <person name="Tanaka T."/>
            <person name="Ishii S."/>
            <person name="Yamamoto J."/>
            <person name="Saito K."/>
            <person name="Kawai Y."/>
            <person name="Isono Y."/>
            <person name="Nakamura Y."/>
            <person name="Nagahari K."/>
            <person name="Murakami K."/>
            <person name="Yasuda T."/>
            <person name="Iwayanagi T."/>
            <person name="Wagatsuma M."/>
            <person name="Shiratori A."/>
            <person name="Sudo H."/>
            <person name="Hosoiri T."/>
            <person name="Kaku Y."/>
            <person name="Kodaira H."/>
            <person name="Kondo H."/>
            <person name="Sugawara M."/>
            <person name="Takahashi M."/>
            <person name="Kanda K."/>
            <person name="Yokoi T."/>
            <person name="Furuya T."/>
            <person name="Kikkawa E."/>
            <person name="Omura Y."/>
            <person name="Abe K."/>
            <person name="Kamihara K."/>
            <person name="Katsuta N."/>
            <person name="Sato K."/>
            <person name="Tanikawa M."/>
            <person name="Yamazaki M."/>
            <person name="Ninomiya K."/>
            <person name="Ishibashi T."/>
            <person name="Yamashita H."/>
            <person name="Murakawa K."/>
            <person name="Fujimori K."/>
            <person name="Tanai H."/>
            <person name="Kimata M."/>
            <person name="Watanabe M."/>
            <person name="Hiraoka S."/>
            <person name="Chiba Y."/>
            <person name="Ishida S."/>
            <person name="Ono Y."/>
            <person name="Takiguchi S."/>
            <person name="Watanabe S."/>
            <person name="Yosida M."/>
            <person name="Hotuta T."/>
            <person name="Kusano J."/>
            <person name="Kanehori K."/>
            <person name="Takahashi-Fujii A."/>
            <person name="Hara H."/>
            <person name="Tanase T.-O."/>
            <person name="Nomura Y."/>
            <person name="Togiya S."/>
            <person name="Komai F."/>
            <person name="Hara R."/>
            <person name="Takeuchi K."/>
            <person name="Arita M."/>
            <person name="Imose N."/>
            <person name="Musashino K."/>
            <person name="Yuuki H."/>
            <person name="Oshima A."/>
            <person name="Sasaki N."/>
            <person name="Aotsuka S."/>
            <person name="Yoshikawa Y."/>
            <person name="Matsunawa H."/>
            <person name="Ichihara T."/>
            <person name="Shiohata N."/>
            <person name="Sano S."/>
            <person name="Moriya S."/>
            <person name="Momiyama H."/>
            <person name="Satoh N."/>
            <person name="Takami S."/>
            <person name="Terashima Y."/>
            <person name="Suzuki O."/>
            <person name="Nakagawa S."/>
            <person name="Senoh A."/>
            <person name="Mizoguchi H."/>
            <person name="Goto Y."/>
            <person name="Shimizu F."/>
            <person name="Wakebe H."/>
            <person name="Hishigaki H."/>
            <person name="Watanabe T."/>
            <person name="Sugiyama A."/>
            <person name="Takemoto M."/>
            <person name="Kawakami B."/>
            <person name="Yamazaki M."/>
            <person name="Watanabe K."/>
            <person name="Kumagai A."/>
            <person name="Itakura S."/>
            <person name="Fukuzumi Y."/>
            <person name="Fujimori Y."/>
            <person name="Komiyama M."/>
            <person name="Tashiro H."/>
            <person name="Tanigami A."/>
            <person name="Fujiwara T."/>
            <person name="Ono T."/>
            <person name="Yamada K."/>
            <person name="Fujii Y."/>
            <person name="Ozaki K."/>
            <person name="Hirao M."/>
            <person name="Ohmori Y."/>
            <person name="Kawabata A."/>
            <person name="Hikiji T."/>
            <person name="Kobatake N."/>
            <person name="Inagaki H."/>
            <person name="Ikema Y."/>
            <person name="Okamoto S."/>
            <person name="Okitani R."/>
            <person name="Kawakami T."/>
            <person name="Noguchi S."/>
            <person name="Itoh T."/>
            <person name="Shigeta K."/>
            <person name="Senba T."/>
            <person name="Matsumura K."/>
            <person name="Nakajima Y."/>
            <person name="Mizuno T."/>
            <person name="Morinaga M."/>
            <person name="Sasaki M."/>
            <person name="Togashi T."/>
            <person name="Oyama M."/>
            <person name="Hata H."/>
            <person name="Watanabe M."/>
            <person name="Komatsu T."/>
            <person name="Mizushima-Sugano J."/>
            <person name="Satoh T."/>
            <person name="Shirai Y."/>
            <person name="Takahashi Y."/>
            <person name="Nakagawa K."/>
            <person name="Okumura K."/>
            <person name="Nagase T."/>
            <person name="Nomura N."/>
            <person name="Kikuchi H."/>
            <person name="Masuho Y."/>
            <person name="Yamashita R."/>
            <person name="Nakai K."/>
            <person name="Yada T."/>
            <person name="Nakamura Y."/>
            <person name="Ohara O."/>
            <person name="Isogai T."/>
            <person name="Sugano S."/>
        </authorList>
    </citation>
    <scope>NUCLEOTIDE SEQUENCE [LARGE SCALE MRNA]</scope>
    <source>
        <tissue>Teratocarcinoma</tissue>
    </source>
</reference>
<reference key="5">
    <citation type="submission" date="2005-03" db="EMBL/GenBank/DDBJ databases">
        <authorList>
            <person name="Totoki Y."/>
            <person name="Toyoda A."/>
            <person name="Takeda T."/>
            <person name="Sakaki Y."/>
            <person name="Tanaka A."/>
            <person name="Yokoyama S."/>
            <person name="Ohara O."/>
            <person name="Nagase T."/>
            <person name="Kikuno R.F."/>
        </authorList>
    </citation>
    <scope>NUCLEOTIDE SEQUENCE [LARGE SCALE MRNA]</scope>
    <source>
        <tissue>Brain</tissue>
    </source>
</reference>
<reference key="6">
    <citation type="journal article" date="2007" name="BMC Genomics">
        <title>The full-ORF clone resource of the German cDNA consortium.</title>
        <authorList>
            <person name="Bechtel S."/>
            <person name="Rosenfelder H."/>
            <person name="Duda A."/>
            <person name="Schmidt C.P."/>
            <person name="Ernst U."/>
            <person name="Wellenreuther R."/>
            <person name="Mehrle A."/>
            <person name="Schuster C."/>
            <person name="Bahr A."/>
            <person name="Bloecker H."/>
            <person name="Heubner D."/>
            <person name="Hoerlein A."/>
            <person name="Michel G."/>
            <person name="Wedler H."/>
            <person name="Koehrer K."/>
            <person name="Ottenwaelder B."/>
            <person name="Poustka A."/>
            <person name="Wiemann S."/>
            <person name="Schupp I."/>
        </authorList>
    </citation>
    <scope>NUCLEOTIDE SEQUENCE [LARGE SCALE MRNA]</scope>
    <source>
        <tissue>Amygdala</tissue>
    </source>
</reference>
<reference key="7">
    <citation type="journal article" date="2005" name="Nature">
        <title>The DNA sequence of the human X chromosome.</title>
        <authorList>
            <person name="Ross M.T."/>
            <person name="Grafham D.V."/>
            <person name="Coffey A.J."/>
            <person name="Scherer S."/>
            <person name="McLay K."/>
            <person name="Muzny D."/>
            <person name="Platzer M."/>
            <person name="Howell G.R."/>
            <person name="Burrows C."/>
            <person name="Bird C.P."/>
            <person name="Frankish A."/>
            <person name="Lovell F.L."/>
            <person name="Howe K.L."/>
            <person name="Ashurst J.L."/>
            <person name="Fulton R.S."/>
            <person name="Sudbrak R."/>
            <person name="Wen G."/>
            <person name="Jones M.C."/>
            <person name="Hurles M.E."/>
            <person name="Andrews T.D."/>
            <person name="Scott C.E."/>
            <person name="Searle S."/>
            <person name="Ramser J."/>
            <person name="Whittaker A."/>
            <person name="Deadman R."/>
            <person name="Carter N.P."/>
            <person name="Hunt S.E."/>
            <person name="Chen R."/>
            <person name="Cree A."/>
            <person name="Gunaratne P."/>
            <person name="Havlak P."/>
            <person name="Hodgson A."/>
            <person name="Metzker M.L."/>
            <person name="Richards S."/>
            <person name="Scott G."/>
            <person name="Steffen D."/>
            <person name="Sodergren E."/>
            <person name="Wheeler D.A."/>
            <person name="Worley K.C."/>
            <person name="Ainscough R."/>
            <person name="Ambrose K.D."/>
            <person name="Ansari-Lari M.A."/>
            <person name="Aradhya S."/>
            <person name="Ashwell R.I."/>
            <person name="Babbage A.K."/>
            <person name="Bagguley C.L."/>
            <person name="Ballabio A."/>
            <person name="Banerjee R."/>
            <person name="Barker G.E."/>
            <person name="Barlow K.F."/>
            <person name="Barrett I.P."/>
            <person name="Bates K.N."/>
            <person name="Beare D.M."/>
            <person name="Beasley H."/>
            <person name="Beasley O."/>
            <person name="Beck A."/>
            <person name="Bethel G."/>
            <person name="Blechschmidt K."/>
            <person name="Brady N."/>
            <person name="Bray-Allen S."/>
            <person name="Bridgeman A.M."/>
            <person name="Brown A.J."/>
            <person name="Brown M.J."/>
            <person name="Bonnin D."/>
            <person name="Bruford E.A."/>
            <person name="Buhay C."/>
            <person name="Burch P."/>
            <person name="Burford D."/>
            <person name="Burgess J."/>
            <person name="Burrill W."/>
            <person name="Burton J."/>
            <person name="Bye J.M."/>
            <person name="Carder C."/>
            <person name="Carrel L."/>
            <person name="Chako J."/>
            <person name="Chapman J.C."/>
            <person name="Chavez D."/>
            <person name="Chen E."/>
            <person name="Chen G."/>
            <person name="Chen Y."/>
            <person name="Chen Z."/>
            <person name="Chinault C."/>
            <person name="Ciccodicola A."/>
            <person name="Clark S.Y."/>
            <person name="Clarke G."/>
            <person name="Clee C.M."/>
            <person name="Clegg S."/>
            <person name="Clerc-Blankenburg K."/>
            <person name="Clifford K."/>
            <person name="Cobley V."/>
            <person name="Cole C.G."/>
            <person name="Conquer J.S."/>
            <person name="Corby N."/>
            <person name="Connor R.E."/>
            <person name="David R."/>
            <person name="Davies J."/>
            <person name="Davis C."/>
            <person name="Davis J."/>
            <person name="Delgado O."/>
            <person name="Deshazo D."/>
            <person name="Dhami P."/>
            <person name="Ding Y."/>
            <person name="Dinh H."/>
            <person name="Dodsworth S."/>
            <person name="Draper H."/>
            <person name="Dugan-Rocha S."/>
            <person name="Dunham A."/>
            <person name="Dunn M."/>
            <person name="Durbin K.J."/>
            <person name="Dutta I."/>
            <person name="Eades T."/>
            <person name="Ellwood M."/>
            <person name="Emery-Cohen A."/>
            <person name="Errington H."/>
            <person name="Evans K.L."/>
            <person name="Faulkner L."/>
            <person name="Francis F."/>
            <person name="Frankland J."/>
            <person name="Fraser A.E."/>
            <person name="Galgoczy P."/>
            <person name="Gilbert J."/>
            <person name="Gill R."/>
            <person name="Gloeckner G."/>
            <person name="Gregory S.G."/>
            <person name="Gribble S."/>
            <person name="Griffiths C."/>
            <person name="Grocock R."/>
            <person name="Gu Y."/>
            <person name="Gwilliam R."/>
            <person name="Hamilton C."/>
            <person name="Hart E.A."/>
            <person name="Hawes A."/>
            <person name="Heath P.D."/>
            <person name="Heitmann K."/>
            <person name="Hennig S."/>
            <person name="Hernandez J."/>
            <person name="Hinzmann B."/>
            <person name="Ho S."/>
            <person name="Hoffs M."/>
            <person name="Howden P.J."/>
            <person name="Huckle E.J."/>
            <person name="Hume J."/>
            <person name="Hunt P.J."/>
            <person name="Hunt A.R."/>
            <person name="Isherwood J."/>
            <person name="Jacob L."/>
            <person name="Johnson D."/>
            <person name="Jones S."/>
            <person name="de Jong P.J."/>
            <person name="Joseph S.S."/>
            <person name="Keenan S."/>
            <person name="Kelly S."/>
            <person name="Kershaw J.K."/>
            <person name="Khan Z."/>
            <person name="Kioschis P."/>
            <person name="Klages S."/>
            <person name="Knights A.J."/>
            <person name="Kosiura A."/>
            <person name="Kovar-Smith C."/>
            <person name="Laird G.K."/>
            <person name="Langford C."/>
            <person name="Lawlor S."/>
            <person name="Leversha M."/>
            <person name="Lewis L."/>
            <person name="Liu W."/>
            <person name="Lloyd C."/>
            <person name="Lloyd D.M."/>
            <person name="Loulseged H."/>
            <person name="Loveland J.E."/>
            <person name="Lovell J.D."/>
            <person name="Lozado R."/>
            <person name="Lu J."/>
            <person name="Lyne R."/>
            <person name="Ma J."/>
            <person name="Maheshwari M."/>
            <person name="Matthews L.H."/>
            <person name="McDowall J."/>
            <person name="McLaren S."/>
            <person name="McMurray A."/>
            <person name="Meidl P."/>
            <person name="Meitinger T."/>
            <person name="Milne S."/>
            <person name="Miner G."/>
            <person name="Mistry S.L."/>
            <person name="Morgan M."/>
            <person name="Morris S."/>
            <person name="Mueller I."/>
            <person name="Mullikin J.C."/>
            <person name="Nguyen N."/>
            <person name="Nordsiek G."/>
            <person name="Nyakatura G."/>
            <person name="O'dell C.N."/>
            <person name="Okwuonu G."/>
            <person name="Palmer S."/>
            <person name="Pandian R."/>
            <person name="Parker D."/>
            <person name="Parrish J."/>
            <person name="Pasternak S."/>
            <person name="Patel D."/>
            <person name="Pearce A.V."/>
            <person name="Pearson D.M."/>
            <person name="Pelan S.E."/>
            <person name="Perez L."/>
            <person name="Porter K.M."/>
            <person name="Ramsey Y."/>
            <person name="Reichwald K."/>
            <person name="Rhodes S."/>
            <person name="Ridler K.A."/>
            <person name="Schlessinger D."/>
            <person name="Schueler M.G."/>
            <person name="Sehra H.K."/>
            <person name="Shaw-Smith C."/>
            <person name="Shen H."/>
            <person name="Sheridan E.M."/>
            <person name="Shownkeen R."/>
            <person name="Skuce C.D."/>
            <person name="Smith M.L."/>
            <person name="Sotheran E.C."/>
            <person name="Steingruber H.E."/>
            <person name="Steward C.A."/>
            <person name="Storey R."/>
            <person name="Swann R.M."/>
            <person name="Swarbreck D."/>
            <person name="Tabor P.E."/>
            <person name="Taudien S."/>
            <person name="Taylor T."/>
            <person name="Teague B."/>
            <person name="Thomas K."/>
            <person name="Thorpe A."/>
            <person name="Timms K."/>
            <person name="Tracey A."/>
            <person name="Trevanion S."/>
            <person name="Tromans A.C."/>
            <person name="d'Urso M."/>
            <person name="Verduzco D."/>
            <person name="Villasana D."/>
            <person name="Waldron L."/>
            <person name="Wall M."/>
            <person name="Wang Q."/>
            <person name="Warren J."/>
            <person name="Warry G.L."/>
            <person name="Wei X."/>
            <person name="West A."/>
            <person name="Whitehead S.L."/>
            <person name="Whiteley M.N."/>
            <person name="Wilkinson J.E."/>
            <person name="Willey D.L."/>
            <person name="Williams G."/>
            <person name="Williams L."/>
            <person name="Williamson A."/>
            <person name="Williamson H."/>
            <person name="Wilming L."/>
            <person name="Woodmansey R.L."/>
            <person name="Wray P.W."/>
            <person name="Yen J."/>
            <person name="Zhang J."/>
            <person name="Zhou J."/>
            <person name="Zoghbi H."/>
            <person name="Zorilla S."/>
            <person name="Buck D."/>
            <person name="Reinhardt R."/>
            <person name="Poustka A."/>
            <person name="Rosenthal A."/>
            <person name="Lehrach H."/>
            <person name="Meindl A."/>
            <person name="Minx P.J."/>
            <person name="Hillier L.W."/>
            <person name="Willard H.F."/>
            <person name="Wilson R.K."/>
            <person name="Waterston R.H."/>
            <person name="Rice C.M."/>
            <person name="Vaudin M."/>
            <person name="Coulson A."/>
            <person name="Nelson D.L."/>
            <person name="Weinstock G."/>
            <person name="Sulston J.E."/>
            <person name="Durbin R.M."/>
            <person name="Hubbard T."/>
            <person name="Gibbs R.A."/>
            <person name="Beck S."/>
            <person name="Rogers J."/>
            <person name="Bentley D.R."/>
        </authorList>
    </citation>
    <scope>NUCLEOTIDE SEQUENCE [LARGE SCALE GENOMIC DNA]</scope>
</reference>
<reference key="8">
    <citation type="submission" date="2005-09" db="EMBL/GenBank/DDBJ databases">
        <authorList>
            <person name="Mural R.J."/>
            <person name="Istrail S."/>
            <person name="Sutton G.G."/>
            <person name="Florea L."/>
            <person name="Halpern A.L."/>
            <person name="Mobarry C.M."/>
            <person name="Lippert R."/>
            <person name="Walenz B."/>
            <person name="Shatkay H."/>
            <person name="Dew I."/>
            <person name="Miller J.R."/>
            <person name="Flanigan M.J."/>
            <person name="Edwards N.J."/>
            <person name="Bolanos R."/>
            <person name="Fasulo D."/>
            <person name="Halldorsson B.V."/>
            <person name="Hannenhalli S."/>
            <person name="Turner R."/>
            <person name="Yooseph S."/>
            <person name="Lu F."/>
            <person name="Nusskern D.R."/>
            <person name="Shue B.C."/>
            <person name="Zheng X.H."/>
            <person name="Zhong F."/>
            <person name="Delcher A.L."/>
            <person name="Huson D.H."/>
            <person name="Kravitz S.A."/>
            <person name="Mouchard L."/>
            <person name="Reinert K."/>
            <person name="Remington K.A."/>
            <person name="Clark A.G."/>
            <person name="Waterman M.S."/>
            <person name="Eichler E.E."/>
            <person name="Adams M.D."/>
            <person name="Hunkapiller M.W."/>
            <person name="Myers E.W."/>
            <person name="Venter J.C."/>
        </authorList>
    </citation>
    <scope>NUCLEOTIDE SEQUENCE [LARGE SCALE GENOMIC DNA]</scope>
</reference>
<reference key="9">
    <citation type="journal article" date="2004" name="Genome Res.">
        <title>The status, quality, and expansion of the NIH full-length cDNA project: the Mammalian Gene Collection (MGC).</title>
        <authorList>
            <consortium name="The MGC Project Team"/>
        </authorList>
    </citation>
    <scope>NUCLEOTIDE SEQUENCE [LARGE SCALE MRNA]</scope>
    <source>
        <tissue>Kidney</tissue>
        <tissue>Muscle</tissue>
    </source>
</reference>
<reference key="10">
    <citation type="journal article" date="2005" name="J. Biol. Chem.">
        <title>DHHC9 and GCP16 constitute a human protein fatty acyltransferase with specificity for H- and N-Ras.</title>
        <authorList>
            <person name="Swarthout J.T."/>
            <person name="Lobo S."/>
            <person name="Farh L."/>
            <person name="Croke M.R."/>
            <person name="Greentree W.K."/>
            <person name="Deschenes R.J."/>
            <person name="Linder M.E."/>
        </authorList>
    </citation>
    <scope>FUNCTION</scope>
    <scope>CATALYTIC ACTIVITY</scope>
    <scope>TISSUE SPECIFICITY</scope>
    <scope>SUBCELLULAR LOCATION</scope>
    <scope>INTERACTION WITH GOLGA7</scope>
    <scope>ACTIVE SITE</scope>
    <scope>MUTAGENESIS OF CYS-169</scope>
</reference>
<reference key="11">
    <citation type="journal article" date="2016" name="J. Biol. Chem.">
        <title>S-Palmitoylation of a Novel Site in the beta2-Adrenergic Receptor Associated with a Novel Intracellular Itinerary.</title>
        <authorList>
            <person name="Adachi N."/>
            <person name="Hess D.T."/>
            <person name="McLaughlin P."/>
            <person name="Stamler J.S."/>
        </authorList>
    </citation>
    <scope>FUNCTION</scope>
    <scope>SUBCELLULAR LOCATION</scope>
</reference>
<reference key="12">
    <citation type="journal article" date="2021" name="Dev. Cell">
        <title>S-acylation controls SARS-CoV-2 membrane lipid organization and enhances infectivity.</title>
        <authorList>
            <person name="Mesquita F.S."/>
            <person name="Abrami L."/>
            <person name="Sergeeva O."/>
            <person name="Turelli P."/>
            <person name="Qing E."/>
            <person name="Kunz B."/>
            <person name="Raclot C."/>
            <person name="Paz Montoya J."/>
            <person name="Abriata L.A."/>
            <person name="Gallagher T."/>
            <person name="Dal Peraro M."/>
            <person name="Trono D."/>
            <person name="D'Angelo G."/>
            <person name="van der Goot F.G."/>
        </authorList>
    </citation>
    <scope>FUNCTION (MICROBIAL INFECTION)</scope>
    <scope>SUBCELLULAR LOCATION</scope>
    <scope>CATALYTIC ACTIVITY</scope>
</reference>
<reference key="13">
    <citation type="journal article" date="2023" name="Mol. Cell">
        <title>Targeting LYPLAL1-mediated cGAS depalmitoylation enhances the response to anti-tumor immunotherapy.</title>
        <authorList>
            <person name="Fan Y."/>
            <person name="Gao Y."/>
            <person name="Nie L."/>
            <person name="Hou T."/>
            <person name="Dan W."/>
            <person name="Wang Z."/>
            <person name="Liu T."/>
            <person name="Wei Y."/>
            <person name="Wang Y."/>
            <person name="Liu B."/>
            <person name="Que T."/>
            <person name="Lei Y."/>
            <person name="Zeng J."/>
            <person name="Ma J."/>
            <person name="Wei W."/>
            <person name="Li L."/>
        </authorList>
    </citation>
    <scope>FUNCTION</scope>
    <scope>CATALYTIC ACTIVITY</scope>
    <scope>ACTIVE SITE</scope>
    <scope>MUTAGENESIS OF CYS-169</scope>
</reference>
<reference key="14">
    <citation type="journal article" date="2024" name="Nature">
        <title>ROS-dependent S-palmitoylation activates cleaved and intact gasdermin D.</title>
        <authorList>
            <person name="Du G."/>
            <person name="Healy L.B."/>
            <person name="David L."/>
            <person name="Walker C."/>
            <person name="El-Baba T.J."/>
            <person name="Lutomski C.A."/>
            <person name="Goh B."/>
            <person name="Gu B."/>
            <person name="Pi X."/>
            <person name="Devant P."/>
            <person name="Fontana P."/>
            <person name="Dong Y."/>
            <person name="Ma X."/>
            <person name="Miao R."/>
            <person name="Balasubramanian A."/>
            <person name="Puthenveetil R."/>
            <person name="Banerjee A."/>
            <person name="Luo H.R."/>
            <person name="Kagan J.C."/>
            <person name="Oh S.F."/>
            <person name="Robinson C.V."/>
            <person name="Lieberman J."/>
            <person name="Wu H."/>
        </authorList>
    </citation>
    <scope>FUNCTION</scope>
    <scope>CATALYTIC ACTIVITY</scope>
</reference>
<reference key="15">
    <citation type="journal article" date="2024" name="Sci. Immunol.">
        <title>The palmitoylation of gasdermin D directs its membrane translocation and pore formation during pyroptosis.</title>
        <authorList>
            <person name="Balasubramanian A."/>
            <person name="Hsu A.Y."/>
            <person name="Ghimire L."/>
            <person name="Tahir M."/>
            <person name="Devant P."/>
            <person name="Fontana P."/>
            <person name="Du G."/>
            <person name="Liu X."/>
            <person name="Fabin D."/>
            <person name="Kambara H."/>
            <person name="Xie X."/>
            <person name="Liu F."/>
            <person name="Hasegawa T."/>
            <person name="Xu R."/>
            <person name="Yu H."/>
            <person name="Chen M."/>
            <person name="Kolakowski S."/>
            <person name="Trauger S."/>
            <person name="Larsen M.R."/>
            <person name="Wei W."/>
            <person name="Wu H."/>
            <person name="Kagan J.C."/>
            <person name="Lieberman J."/>
            <person name="Luo H.R."/>
        </authorList>
    </citation>
    <scope>FUNCTION</scope>
    <scope>CATALYTIC ACTIVITY</scope>
</reference>
<reference key="16">
    <citation type="journal article" date="2007" name="Am. J. Hum. Genet.">
        <title>Mutations in ZDHHC9, which encodes a palmitoyltransferase of NRAS and HRAS, cause X-linked mental retardation associated with a Marfanoid habitus.</title>
        <authorList>
            <person name="Raymond F.L."/>
            <person name="Tarpey P.S."/>
            <person name="Edkins S."/>
            <person name="Tofts C."/>
            <person name="O'Meara S."/>
            <person name="Teague J."/>
            <person name="Butler A."/>
            <person name="Stevens C."/>
            <person name="Barthorpe S."/>
            <person name="Buck G."/>
            <person name="Cole J."/>
            <person name="Dicks E."/>
            <person name="Gray K."/>
            <person name="Halliday K."/>
            <person name="Hills K."/>
            <person name="Hinton J."/>
            <person name="Jones D."/>
            <person name="Menzies A."/>
            <person name="Perry J."/>
            <person name="Raine K."/>
            <person name="Shepherd R."/>
            <person name="Small A."/>
            <person name="Varian J."/>
            <person name="Widaa S."/>
            <person name="Mallya U."/>
            <person name="Moon J."/>
            <person name="Luo Y."/>
            <person name="Shaw M."/>
            <person name="Boyle J."/>
            <person name="Kerr B."/>
            <person name="Turner G."/>
            <person name="Quarrell O."/>
            <person name="Cole T."/>
            <person name="Easton D.F."/>
            <person name="Wooster R."/>
            <person name="Bobrow M."/>
            <person name="Schwartz C.E."/>
            <person name="Gecz J."/>
            <person name="Stratton M.R."/>
            <person name="Futreal P.A."/>
        </authorList>
    </citation>
    <scope>VARIANTS MRXSR TRP-148 AND SER-150</scope>
</reference>
<reference key="17">
    <citation type="journal article" date="2009" name="Nat. Genet.">
        <title>A systematic, large-scale resequencing screen of X-chromosome coding exons in mental retardation.</title>
        <authorList>
            <person name="Tarpey P.S."/>
            <person name="Smith R."/>
            <person name="Pleasance E."/>
            <person name="Whibley A."/>
            <person name="Edkins S."/>
            <person name="Hardy C."/>
            <person name="O'Meara S."/>
            <person name="Latimer C."/>
            <person name="Dicks E."/>
            <person name="Menzies A."/>
            <person name="Stephens P."/>
            <person name="Blow M."/>
            <person name="Greenman C."/>
            <person name="Xue Y."/>
            <person name="Tyler-Smith C."/>
            <person name="Thompson D."/>
            <person name="Gray K."/>
            <person name="Andrews J."/>
            <person name="Barthorpe S."/>
            <person name="Buck G."/>
            <person name="Cole J."/>
            <person name="Dunmore R."/>
            <person name="Jones D."/>
            <person name="Maddison M."/>
            <person name="Mironenko T."/>
            <person name="Turner R."/>
            <person name="Turrell K."/>
            <person name="Varian J."/>
            <person name="West S."/>
            <person name="Widaa S."/>
            <person name="Wray P."/>
            <person name="Teague J."/>
            <person name="Butler A."/>
            <person name="Jenkinson A."/>
            <person name="Jia M."/>
            <person name="Richardson D."/>
            <person name="Shepherd R."/>
            <person name="Wooster R."/>
            <person name="Tejada M.I."/>
            <person name="Martinez F."/>
            <person name="Carvill G."/>
            <person name="Goliath R."/>
            <person name="de Brouwer A.P."/>
            <person name="van Bokhoven H."/>
            <person name="Van Esch H."/>
            <person name="Chelly J."/>
            <person name="Raynaud M."/>
            <person name="Ropers H.H."/>
            <person name="Abidi F.E."/>
            <person name="Srivastava A.K."/>
            <person name="Cox J."/>
            <person name="Luo Y."/>
            <person name="Mallya U."/>
            <person name="Moon J."/>
            <person name="Parnau J."/>
            <person name="Mohammed S."/>
            <person name="Tolmie J.L."/>
            <person name="Shoubridge C."/>
            <person name="Corbett M."/>
            <person name="Gardner A."/>
            <person name="Haan E."/>
            <person name="Rujirabanjerd S."/>
            <person name="Shaw M."/>
            <person name="Vandeleur L."/>
            <person name="Fullston T."/>
            <person name="Easton D.F."/>
            <person name="Boyle J."/>
            <person name="Partington M."/>
            <person name="Hackett A."/>
            <person name="Field M."/>
            <person name="Skinner C."/>
            <person name="Stevenson R.E."/>
            <person name="Bobrow M."/>
            <person name="Turner G."/>
            <person name="Schwartz C.E."/>
            <person name="Gecz J."/>
            <person name="Raymond F.L."/>
            <person name="Futreal P.A."/>
            <person name="Stratton M.R."/>
        </authorList>
    </citation>
    <scope>VARIANTS MRXSR [LARGE SCALE ANALYSIS] TRP-148 AND SER-150</scope>
</reference>
<feature type="chain" id="PRO_0000212880" description="Palmitoyltransferase ZDHHC9">
    <location>
        <begin position="1"/>
        <end position="364"/>
    </location>
</feature>
<feature type="topological domain" description="Cytoplasmic" evidence="2">
    <location>
        <begin position="1"/>
        <end position="35"/>
    </location>
</feature>
<feature type="transmembrane region" description="Helical" evidence="2">
    <location>
        <begin position="36"/>
        <end position="56"/>
    </location>
</feature>
<feature type="topological domain" description="Lumenal" evidence="2">
    <location>
        <begin position="57"/>
        <end position="63"/>
    </location>
</feature>
<feature type="transmembrane region" description="Helical" evidence="2">
    <location>
        <begin position="64"/>
        <end position="84"/>
    </location>
</feature>
<feature type="topological domain" description="Cytoplasmic" evidence="2">
    <location>
        <begin position="85"/>
        <end position="183"/>
    </location>
</feature>
<feature type="transmembrane region" description="Helical" evidence="2">
    <location>
        <begin position="184"/>
        <end position="204"/>
    </location>
</feature>
<feature type="topological domain" description="Lumenal" evidence="2">
    <location>
        <begin position="205"/>
        <end position="228"/>
    </location>
</feature>
<feature type="transmembrane region" description="Helical" evidence="2">
    <location>
        <begin position="229"/>
        <end position="249"/>
    </location>
</feature>
<feature type="topological domain" description="Cytoplasmic" evidence="2">
    <location>
        <begin position="250"/>
        <end position="364"/>
    </location>
</feature>
<feature type="domain" description="DHHC" evidence="3">
    <location>
        <begin position="139"/>
        <end position="189"/>
    </location>
</feature>
<feature type="region of interest" description="Disordered" evidence="4">
    <location>
        <begin position="303"/>
        <end position="364"/>
    </location>
</feature>
<feature type="compositionally biased region" description="Polar residues" evidence="4">
    <location>
        <begin position="310"/>
        <end position="323"/>
    </location>
</feature>
<feature type="compositionally biased region" description="Pro residues" evidence="4">
    <location>
        <begin position="346"/>
        <end position="356"/>
    </location>
</feature>
<feature type="active site" description="S-palmitoyl cysteine intermediate" evidence="15 16">
    <location>
        <position position="169"/>
    </location>
</feature>
<feature type="sequence variant" id="VAR_062674" description="In MRXSR; dbSNP:rs137852214." evidence="6 7">
    <original>R</original>
    <variation>W</variation>
    <location>
        <position position="148"/>
    </location>
</feature>
<feature type="sequence variant" id="VAR_062675" description="In MRXSR; dbSNP:rs137852215." evidence="6 7">
    <original>P</original>
    <variation>S</variation>
    <location>
        <position position="150"/>
    </location>
</feature>
<feature type="mutagenesis site" description="Abolishes palmitoyltransferase activity." evidence="5 10">
    <original>C</original>
    <variation>S</variation>
    <location>
        <position position="169"/>
    </location>
</feature>
<feature type="sequence conflict" description="In Ref. 4; BAA91740." evidence="14" ref="4">
    <original>K</original>
    <variation>R</variation>
    <location>
        <position position="35"/>
    </location>
</feature>
<feature type="sequence conflict" description="In Ref. 4; BAA91740." evidence="14" ref="4">
    <original>F</original>
    <variation>L</variation>
    <location>
        <position position="52"/>
    </location>
</feature>
<feature type="sequence conflict" description="In Ref. 2; AAD34084." evidence="14" ref="2">
    <original>QG</original>
    <variation>GY</variation>
    <location>
        <begin position="118"/>
        <end position="119"/>
    </location>
</feature>
<feature type="strand" evidence="18">
    <location>
        <begin position="12"/>
        <end position="17"/>
    </location>
</feature>
<feature type="strand" evidence="18">
    <location>
        <begin position="19"/>
        <end position="22"/>
    </location>
</feature>
<feature type="helix" evidence="18">
    <location>
        <begin position="25"/>
        <end position="27"/>
    </location>
</feature>
<feature type="strand" evidence="18">
    <location>
        <begin position="31"/>
        <end position="33"/>
    </location>
</feature>
<feature type="helix" evidence="18">
    <location>
        <begin position="36"/>
        <end position="55"/>
    </location>
</feature>
<feature type="helix" evidence="18">
    <location>
        <begin position="57"/>
        <end position="62"/>
    </location>
</feature>
<feature type="helix" evidence="18">
    <location>
        <begin position="68"/>
        <end position="88"/>
    </location>
</feature>
<feature type="helix" evidence="18">
    <location>
        <begin position="99"/>
        <end position="113"/>
    </location>
</feature>
<feature type="strand" evidence="18">
    <location>
        <begin position="128"/>
        <end position="137"/>
    </location>
</feature>
<feature type="turn" evidence="18">
    <location>
        <begin position="142"/>
        <end position="145"/>
    </location>
</feature>
<feature type="strand" evidence="18">
    <location>
        <begin position="153"/>
        <end position="155"/>
    </location>
</feature>
<feature type="turn" evidence="18">
    <location>
        <begin position="156"/>
        <end position="159"/>
    </location>
</feature>
<feature type="strand" evidence="18">
    <location>
        <begin position="160"/>
        <end position="162"/>
    </location>
</feature>
<feature type="turn" evidence="18">
    <location>
        <begin position="170"/>
        <end position="173"/>
    </location>
</feature>
<feature type="helix" evidence="18">
    <location>
        <begin position="182"/>
        <end position="210"/>
    </location>
</feature>
<feature type="turn" evidence="18">
    <location>
        <begin position="211"/>
        <end position="213"/>
    </location>
</feature>
<feature type="helix" evidence="18">
    <location>
        <begin position="215"/>
        <end position="221"/>
    </location>
</feature>
<feature type="helix" evidence="18">
    <location>
        <begin position="224"/>
        <end position="246"/>
    </location>
</feature>
<feature type="turn" evidence="18">
    <location>
        <begin position="247"/>
        <end position="253"/>
    </location>
</feature>
<feature type="helix" evidence="18">
    <location>
        <begin position="256"/>
        <end position="261"/>
    </location>
</feature>
<feature type="strand" evidence="18">
    <location>
        <begin position="263"/>
        <end position="267"/>
    </location>
</feature>
<feature type="helix" evidence="18">
    <location>
        <begin position="280"/>
        <end position="287"/>
    </location>
</feature>
<name>ZDHC9_HUMAN</name>
<accession>Q9Y397</accession>
<accession>B4F6G2</accession>
<accession>D3DTF9</accession>
<accession>Q59EK4</accession>
<accession>Q5JSW5</accession>
<accession>Q8WWS7</accession>
<accession>Q9BPY4</accession>
<accession>Q9NSP0</accession>
<accession>Q9NVL0</accession>
<accession>Q9NVR6</accession>
<gene>
    <name evidence="13 17" type="primary">ZDHHC9</name>
    <name type="synonym">CXorf11</name>
    <name type="synonym">ZDHHC10</name>
    <name type="synonym">ZNF379</name>
    <name type="synonym">ZNF380</name>
    <name type="ORF">CGI-89</name>
    <name type="ORF">UNQ261/PRO298</name>
</gene>